<accession>Q9HIT4</accession>
<keyword id="KW-0413">Isomerase</keyword>
<keyword id="KW-1185">Reference proteome</keyword>
<keyword id="KW-0819">tRNA processing</keyword>
<feature type="chain" id="PRO_0000121973" description="Probable tRNA pseudouridine synthase B">
    <location>
        <begin position="1"/>
        <end position="365"/>
    </location>
</feature>
<feature type="domain" description="PUA" evidence="1">
    <location>
        <begin position="209"/>
        <end position="285"/>
    </location>
</feature>
<feature type="region of interest" description="Disordered" evidence="2">
    <location>
        <begin position="300"/>
        <end position="365"/>
    </location>
</feature>
<feature type="compositionally biased region" description="Basic and acidic residues" evidence="2">
    <location>
        <begin position="304"/>
        <end position="318"/>
    </location>
</feature>
<feature type="compositionally biased region" description="Basic and acidic residues" evidence="2">
    <location>
        <begin position="326"/>
        <end position="336"/>
    </location>
</feature>
<feature type="compositionally biased region" description="Basic and acidic residues" evidence="2">
    <location>
        <begin position="354"/>
        <end position="365"/>
    </location>
</feature>
<feature type="active site" description="Nucleophile" evidence="1">
    <location>
        <position position="43"/>
    </location>
</feature>
<proteinExistence type="inferred from homology"/>
<name>TRUB_THEAC</name>
<protein>
    <recommendedName>
        <fullName evidence="1">Probable tRNA pseudouridine synthase B</fullName>
        <ecNumber evidence="1">5.4.99.25</ecNumber>
    </recommendedName>
    <alternativeName>
        <fullName evidence="1">tRNA pseudouridine(55) synthase</fullName>
        <shortName evidence="1">Psi55 synthase</shortName>
    </alternativeName>
    <alternativeName>
        <fullName evidence="1">tRNA pseudouridylate synthase</fullName>
    </alternativeName>
    <alternativeName>
        <fullName evidence="1">tRNA-uridine isomerase</fullName>
    </alternativeName>
</protein>
<organism>
    <name type="scientific">Thermoplasma acidophilum (strain ATCC 25905 / DSM 1728 / JCM 9062 / NBRC 15155 / AMRC-C165)</name>
    <dbReference type="NCBI Taxonomy" id="273075"/>
    <lineage>
        <taxon>Archaea</taxon>
        <taxon>Methanobacteriati</taxon>
        <taxon>Thermoplasmatota</taxon>
        <taxon>Thermoplasmata</taxon>
        <taxon>Thermoplasmatales</taxon>
        <taxon>Thermoplasmataceae</taxon>
        <taxon>Thermoplasma</taxon>
    </lineage>
</organism>
<gene>
    <name evidence="1" type="primary">truB</name>
    <name type="ordered locus">Ta1244</name>
</gene>
<reference key="1">
    <citation type="journal article" date="2000" name="Nature">
        <title>The genome sequence of the thermoacidophilic scavenger Thermoplasma acidophilum.</title>
        <authorList>
            <person name="Ruepp A."/>
            <person name="Graml W."/>
            <person name="Santos-Martinez M.-L."/>
            <person name="Koretke K.K."/>
            <person name="Volker C."/>
            <person name="Mewes H.-W."/>
            <person name="Frishman D."/>
            <person name="Stocker S."/>
            <person name="Lupas A.N."/>
            <person name="Baumeister W."/>
        </authorList>
    </citation>
    <scope>NUCLEOTIDE SEQUENCE [LARGE SCALE GENOMIC DNA]</scope>
    <source>
        <strain>ATCC 25905 / DSM 1728 / JCM 9062 / NBRC 15155 / AMRC-C165</strain>
    </source>
</reference>
<evidence type="ECO:0000255" key="1">
    <source>
        <dbReference type="HAMAP-Rule" id="MF_01081"/>
    </source>
</evidence>
<evidence type="ECO:0000256" key="2">
    <source>
        <dbReference type="SAM" id="MobiDB-lite"/>
    </source>
</evidence>
<evidence type="ECO:0000305" key="3"/>
<dbReference type="EC" id="5.4.99.25" evidence="1"/>
<dbReference type="EMBL" id="AL445067">
    <property type="protein sequence ID" value="CAC12368.1"/>
    <property type="status" value="ALT_INIT"/>
    <property type="molecule type" value="Genomic_DNA"/>
</dbReference>
<dbReference type="RefSeq" id="WP_010901651.1">
    <property type="nucleotide sequence ID" value="NC_002578.1"/>
</dbReference>
<dbReference type="SMR" id="Q9HIT4"/>
<dbReference type="FunCoup" id="Q9HIT4">
    <property type="interactions" value="105"/>
</dbReference>
<dbReference type="STRING" id="273075.gene:9572467"/>
<dbReference type="PaxDb" id="273075-Ta1244"/>
<dbReference type="EnsemblBacteria" id="CAC12368">
    <property type="protein sequence ID" value="CAC12368"/>
    <property type="gene ID" value="CAC12368"/>
</dbReference>
<dbReference type="KEGG" id="tac:Ta1244"/>
<dbReference type="eggNOG" id="arCOG00987">
    <property type="taxonomic scope" value="Archaea"/>
</dbReference>
<dbReference type="HOGENOM" id="CLU_032087_3_0_2"/>
<dbReference type="InParanoid" id="Q9HIT4"/>
<dbReference type="OrthoDB" id="35866at2157"/>
<dbReference type="Proteomes" id="UP000001024">
    <property type="component" value="Chromosome"/>
</dbReference>
<dbReference type="GO" id="GO:0003723">
    <property type="term" value="F:RNA binding"/>
    <property type="evidence" value="ECO:0007669"/>
    <property type="project" value="InterPro"/>
</dbReference>
<dbReference type="GO" id="GO:0160148">
    <property type="term" value="F:tRNA pseudouridine(55) synthase activity"/>
    <property type="evidence" value="ECO:0007669"/>
    <property type="project" value="UniProtKB-EC"/>
</dbReference>
<dbReference type="GO" id="GO:0000495">
    <property type="term" value="P:box H/ACA sno(s)RNA 3'-end processing"/>
    <property type="evidence" value="ECO:0007669"/>
    <property type="project" value="TreeGrafter"/>
</dbReference>
<dbReference type="GO" id="GO:1990481">
    <property type="term" value="P:mRNA pseudouridine synthesis"/>
    <property type="evidence" value="ECO:0007669"/>
    <property type="project" value="TreeGrafter"/>
</dbReference>
<dbReference type="GO" id="GO:0031118">
    <property type="term" value="P:rRNA pseudouridine synthesis"/>
    <property type="evidence" value="ECO:0007669"/>
    <property type="project" value="TreeGrafter"/>
</dbReference>
<dbReference type="GO" id="GO:0031120">
    <property type="term" value="P:snRNA pseudouridine synthesis"/>
    <property type="evidence" value="ECO:0007669"/>
    <property type="project" value="TreeGrafter"/>
</dbReference>
<dbReference type="GO" id="GO:0031119">
    <property type="term" value="P:tRNA pseudouridine synthesis"/>
    <property type="evidence" value="ECO:0007669"/>
    <property type="project" value="UniProtKB-UniRule"/>
</dbReference>
<dbReference type="CDD" id="cd02572">
    <property type="entry name" value="PseudoU_synth_hDyskerin"/>
    <property type="match status" value="1"/>
</dbReference>
<dbReference type="CDD" id="cd07953">
    <property type="entry name" value="PUA"/>
    <property type="match status" value="1"/>
</dbReference>
<dbReference type="Gene3D" id="3.30.2350.10">
    <property type="entry name" value="Pseudouridine synthase"/>
    <property type="match status" value="1"/>
</dbReference>
<dbReference type="Gene3D" id="2.30.130.10">
    <property type="entry name" value="PUA domain"/>
    <property type="match status" value="1"/>
</dbReference>
<dbReference type="HAMAP" id="MF_01081">
    <property type="entry name" value="TruB_arch"/>
    <property type="match status" value="1"/>
</dbReference>
<dbReference type="InterPro" id="IPR020103">
    <property type="entry name" value="PsdUridine_synth_cat_dom_sf"/>
</dbReference>
<dbReference type="InterPro" id="IPR002501">
    <property type="entry name" value="PsdUridine_synth_N"/>
</dbReference>
<dbReference type="InterPro" id="IPR002478">
    <property type="entry name" value="PUA"/>
</dbReference>
<dbReference type="InterPro" id="IPR015947">
    <property type="entry name" value="PUA-like_sf"/>
</dbReference>
<dbReference type="InterPro" id="IPR036974">
    <property type="entry name" value="PUA_sf"/>
</dbReference>
<dbReference type="InterPro" id="IPR004802">
    <property type="entry name" value="tRNA_PsdUridine_synth_B_fam"/>
</dbReference>
<dbReference type="InterPro" id="IPR026326">
    <property type="entry name" value="TruB_arch"/>
</dbReference>
<dbReference type="InterPro" id="IPR032819">
    <property type="entry name" value="TruB_C"/>
</dbReference>
<dbReference type="NCBIfam" id="TIGR00425">
    <property type="entry name" value="CBF5"/>
    <property type="match status" value="1"/>
</dbReference>
<dbReference type="NCBIfam" id="NF003280">
    <property type="entry name" value="PRK04270.1"/>
    <property type="match status" value="1"/>
</dbReference>
<dbReference type="PANTHER" id="PTHR23127">
    <property type="entry name" value="CENTROMERE/MICROTUBULE BINDING PROTEIN CBF5"/>
    <property type="match status" value="1"/>
</dbReference>
<dbReference type="PANTHER" id="PTHR23127:SF0">
    <property type="entry name" value="H_ACA RIBONUCLEOPROTEIN COMPLEX SUBUNIT DKC1"/>
    <property type="match status" value="1"/>
</dbReference>
<dbReference type="Pfam" id="PF01472">
    <property type="entry name" value="PUA"/>
    <property type="match status" value="1"/>
</dbReference>
<dbReference type="Pfam" id="PF16198">
    <property type="entry name" value="TruB_C_2"/>
    <property type="match status" value="1"/>
</dbReference>
<dbReference type="Pfam" id="PF01509">
    <property type="entry name" value="TruB_N"/>
    <property type="match status" value="1"/>
</dbReference>
<dbReference type="SMART" id="SM00359">
    <property type="entry name" value="PUA"/>
    <property type="match status" value="1"/>
</dbReference>
<dbReference type="SUPFAM" id="SSF55120">
    <property type="entry name" value="Pseudouridine synthase"/>
    <property type="match status" value="1"/>
</dbReference>
<dbReference type="SUPFAM" id="SSF88697">
    <property type="entry name" value="PUA domain-like"/>
    <property type="match status" value="1"/>
</dbReference>
<dbReference type="PROSITE" id="PS50890">
    <property type="entry name" value="PUA"/>
    <property type="match status" value="1"/>
</dbReference>
<sequence length="365" mass="40989">MDFSNINGFVVLDKPQGPTSHQVDHWVREILGIEKVAHIGTLDPNVTGVLTMAIGKAVRLVDVVHESPKEYVGVMRFYEDITEEEVRYYFKKFTGRIYQLPPVRSAVARSLRIKTVYSLDLLEKKDRLVLFHVKCESGTYIRTLCTDIGYVSGKGGQMVDLRRTSTGPFSEDRCITLQDFAAMVELARKGEDKLLRDHILDMTYAFKDYPKIVVKRSAMRNIAHGSDLYAGGIKIIDGKFRKGERVAVISEDNDLVGTGIAMCSSDNIFMKVVDFDHIFLEADDGKDNVVRIGKEAVQKSGSGLHKDIQRSEGRKDTRTGWYGRDTGPEKTADRVWKGKNKGRVYPRSGADKGGGGKERHGRDHQ</sequence>
<comment type="function">
    <text evidence="1">Could be responsible for synthesis of pseudouridine from uracil-55 in the psi GC loop of transfer RNAs.</text>
</comment>
<comment type="catalytic activity">
    <reaction evidence="1">
        <text>uridine(55) in tRNA = pseudouridine(55) in tRNA</text>
        <dbReference type="Rhea" id="RHEA:42532"/>
        <dbReference type="Rhea" id="RHEA-COMP:10101"/>
        <dbReference type="Rhea" id="RHEA-COMP:10102"/>
        <dbReference type="ChEBI" id="CHEBI:65314"/>
        <dbReference type="ChEBI" id="CHEBI:65315"/>
        <dbReference type="EC" id="5.4.99.25"/>
    </reaction>
</comment>
<comment type="similarity">
    <text evidence="1">Belongs to the pseudouridine synthase TruB family. Type 2 subfamily.</text>
</comment>
<comment type="sequence caution" evidence="3">
    <conflict type="erroneous initiation">
        <sequence resource="EMBL-CDS" id="CAC12368"/>
    </conflict>
</comment>